<reference key="1">
    <citation type="journal article" date="2004" name="Nature">
        <title>Genome evolution in yeasts.</title>
        <authorList>
            <person name="Dujon B."/>
            <person name="Sherman D."/>
            <person name="Fischer G."/>
            <person name="Durrens P."/>
            <person name="Casaregola S."/>
            <person name="Lafontaine I."/>
            <person name="de Montigny J."/>
            <person name="Marck C."/>
            <person name="Neuveglise C."/>
            <person name="Talla E."/>
            <person name="Goffard N."/>
            <person name="Frangeul L."/>
            <person name="Aigle M."/>
            <person name="Anthouard V."/>
            <person name="Babour A."/>
            <person name="Barbe V."/>
            <person name="Barnay S."/>
            <person name="Blanchin S."/>
            <person name="Beckerich J.-M."/>
            <person name="Beyne E."/>
            <person name="Bleykasten C."/>
            <person name="Boisrame A."/>
            <person name="Boyer J."/>
            <person name="Cattolico L."/>
            <person name="Confanioleri F."/>
            <person name="de Daruvar A."/>
            <person name="Despons L."/>
            <person name="Fabre E."/>
            <person name="Fairhead C."/>
            <person name="Ferry-Dumazet H."/>
            <person name="Groppi A."/>
            <person name="Hantraye F."/>
            <person name="Hennequin C."/>
            <person name="Jauniaux N."/>
            <person name="Joyet P."/>
            <person name="Kachouri R."/>
            <person name="Kerrest A."/>
            <person name="Koszul R."/>
            <person name="Lemaire M."/>
            <person name="Lesur I."/>
            <person name="Ma L."/>
            <person name="Muller H."/>
            <person name="Nicaud J.-M."/>
            <person name="Nikolski M."/>
            <person name="Oztas S."/>
            <person name="Ozier-Kalogeropoulos O."/>
            <person name="Pellenz S."/>
            <person name="Potier S."/>
            <person name="Richard G.-F."/>
            <person name="Straub M.-L."/>
            <person name="Suleau A."/>
            <person name="Swennen D."/>
            <person name="Tekaia F."/>
            <person name="Wesolowski-Louvel M."/>
            <person name="Westhof E."/>
            <person name="Wirth B."/>
            <person name="Zeniou-Meyer M."/>
            <person name="Zivanovic Y."/>
            <person name="Bolotin-Fukuhara M."/>
            <person name="Thierry A."/>
            <person name="Bouchier C."/>
            <person name="Caudron B."/>
            <person name="Scarpelli C."/>
            <person name="Gaillardin C."/>
            <person name="Weissenbach J."/>
            <person name="Wincker P."/>
            <person name="Souciet J.-L."/>
        </authorList>
    </citation>
    <scope>NUCLEOTIDE SEQUENCE [LARGE SCALE GENOMIC DNA]</scope>
    <source>
        <strain>ATCC 8585 / CBS 2359 / DSM 70799 / NBRC 1267 / NRRL Y-1140 / WM37</strain>
    </source>
</reference>
<dbReference type="EC" id="3.1.-.-"/>
<dbReference type="EMBL" id="CR382122">
    <property type="protein sequence ID" value="CAH02352.1"/>
    <property type="molecule type" value="Genomic_DNA"/>
</dbReference>
<dbReference type="RefSeq" id="XP_451959.1">
    <property type="nucleotide sequence ID" value="XM_451959.1"/>
</dbReference>
<dbReference type="FunCoup" id="Q6CVT0">
    <property type="interactions" value="28"/>
</dbReference>
<dbReference type="PaxDb" id="284590-Q6CVT0"/>
<dbReference type="KEGG" id="kla:KLLA0_B09680g"/>
<dbReference type="eggNOG" id="ENOG502QR0P">
    <property type="taxonomic scope" value="Eukaryota"/>
</dbReference>
<dbReference type="HOGENOM" id="CLU_019985_0_0_1"/>
<dbReference type="InParanoid" id="Q6CVT0"/>
<dbReference type="OMA" id="LQVMYYR"/>
<dbReference type="Proteomes" id="UP000000598">
    <property type="component" value="Chromosome B"/>
</dbReference>
<dbReference type="GO" id="GO:0005739">
    <property type="term" value="C:mitochondrion"/>
    <property type="evidence" value="ECO:0007669"/>
    <property type="project" value="UniProtKB-SubCell"/>
</dbReference>
<dbReference type="GO" id="GO:0005634">
    <property type="term" value="C:nucleus"/>
    <property type="evidence" value="ECO:0007669"/>
    <property type="project" value="TreeGrafter"/>
</dbReference>
<dbReference type="GO" id="GO:0051539">
    <property type="term" value="F:4 iron, 4 sulfur cluster binding"/>
    <property type="evidence" value="ECO:0007669"/>
    <property type="project" value="UniProtKB-KW"/>
</dbReference>
<dbReference type="GO" id="GO:0003677">
    <property type="term" value="F:DNA binding"/>
    <property type="evidence" value="ECO:0007669"/>
    <property type="project" value="UniProtKB-KW"/>
</dbReference>
<dbReference type="GO" id="GO:0046872">
    <property type="term" value="F:metal ion binding"/>
    <property type="evidence" value="ECO:0007669"/>
    <property type="project" value="UniProtKB-KW"/>
</dbReference>
<dbReference type="GO" id="GO:0045145">
    <property type="term" value="F:single-stranded DNA 5'-3' DNA exonuclease activity"/>
    <property type="evidence" value="ECO:0007669"/>
    <property type="project" value="InterPro"/>
</dbReference>
<dbReference type="GO" id="GO:0036297">
    <property type="term" value="P:interstrand cross-link repair"/>
    <property type="evidence" value="ECO:0007669"/>
    <property type="project" value="TreeGrafter"/>
</dbReference>
<dbReference type="GO" id="GO:0000002">
    <property type="term" value="P:mitochondrial genome maintenance"/>
    <property type="evidence" value="ECO:0007669"/>
    <property type="project" value="InterPro"/>
</dbReference>
<dbReference type="InterPro" id="IPR016610">
    <property type="entry name" value="Exo5"/>
</dbReference>
<dbReference type="InterPro" id="IPR019190">
    <property type="entry name" value="EXOV"/>
</dbReference>
<dbReference type="PANTHER" id="PTHR14464">
    <property type="entry name" value="EXONUCLEASE V"/>
    <property type="match status" value="1"/>
</dbReference>
<dbReference type="PANTHER" id="PTHR14464:SF4">
    <property type="entry name" value="EXONUCLEASE V"/>
    <property type="match status" value="1"/>
</dbReference>
<dbReference type="Pfam" id="PF09810">
    <property type="entry name" value="Exo5"/>
    <property type="match status" value="1"/>
</dbReference>
<dbReference type="PIRSF" id="PIRSF013220">
    <property type="entry name" value="UCP013220"/>
    <property type="match status" value="1"/>
</dbReference>
<feature type="transit peptide" description="Mitochondrion" evidence="2">
    <location>
        <begin position="1"/>
        <end status="unknown"/>
    </location>
</feature>
<feature type="chain" id="PRO_0000285324" description="Exonuclease V, mitochondrial">
    <location>
        <begin status="unknown"/>
        <end position="552"/>
    </location>
</feature>
<feature type="binding site" evidence="1">
    <location>
        <position position="129"/>
    </location>
    <ligand>
        <name>[4Fe-4S] cluster</name>
        <dbReference type="ChEBI" id="CHEBI:49883"/>
    </ligand>
</feature>
<feature type="binding site" evidence="1">
    <location>
        <position position="520"/>
    </location>
    <ligand>
        <name>[4Fe-4S] cluster</name>
        <dbReference type="ChEBI" id="CHEBI:49883"/>
    </ligand>
</feature>
<feature type="binding site" evidence="1">
    <location>
        <position position="523"/>
    </location>
    <ligand>
        <name>[4Fe-4S] cluster</name>
        <dbReference type="ChEBI" id="CHEBI:49883"/>
    </ligand>
</feature>
<feature type="binding site" evidence="1">
    <location>
        <position position="529"/>
    </location>
    <ligand>
        <name>[4Fe-4S] cluster</name>
        <dbReference type="ChEBI" id="CHEBI:49883"/>
    </ligand>
</feature>
<evidence type="ECO:0000250" key="1"/>
<evidence type="ECO:0000255" key="2"/>
<evidence type="ECO:0000305" key="3"/>
<protein>
    <recommendedName>
        <fullName>Exonuclease V, mitochondrial</fullName>
        <shortName>Exo V</shortName>
        <ecNumber>3.1.-.-</ecNumber>
    </recommendedName>
    <alternativeName>
        <fullName>Defects in morphology protein 1</fullName>
    </alternativeName>
</protein>
<name>EXO5_KLULA</name>
<proteinExistence type="inferred from homology"/>
<accession>Q6CVT0</accession>
<organism>
    <name type="scientific">Kluyveromyces lactis (strain ATCC 8585 / CBS 2359 / DSM 70799 / NBRC 1267 / NRRL Y-1140 / WM37)</name>
    <name type="common">Yeast</name>
    <name type="synonym">Candida sphaerica</name>
    <dbReference type="NCBI Taxonomy" id="284590"/>
    <lineage>
        <taxon>Eukaryota</taxon>
        <taxon>Fungi</taxon>
        <taxon>Dikarya</taxon>
        <taxon>Ascomycota</taxon>
        <taxon>Saccharomycotina</taxon>
        <taxon>Saccharomycetes</taxon>
        <taxon>Saccharomycetales</taxon>
        <taxon>Saccharomycetaceae</taxon>
        <taxon>Kluyveromyces</taxon>
    </lineage>
</organism>
<keyword id="KW-0004">4Fe-4S</keyword>
<keyword id="KW-0238">DNA-binding</keyword>
<keyword id="KW-0269">Exonuclease</keyword>
<keyword id="KW-0378">Hydrolase</keyword>
<keyword id="KW-0408">Iron</keyword>
<keyword id="KW-0411">Iron-sulfur</keyword>
<keyword id="KW-0460">Magnesium</keyword>
<keyword id="KW-0479">Metal-binding</keyword>
<keyword id="KW-0496">Mitochondrion</keyword>
<keyword id="KW-0540">Nuclease</keyword>
<keyword id="KW-1185">Reference proteome</keyword>
<keyword id="KW-0809">Transit peptide</keyword>
<sequence>MIRRFLRLYSIKRNTHLILEDLQSIKFNKDDLKAIDSALKLVTVKQTTSSSKLSRTRAKQEYIDRKLEVIRNIFPGEPDSEYVSMEPPNDLKNPYFDVYSKTVLDEDGNIKFAGTERLSVTKLLTKRWCELNQMYDIYSRLPIFEHRQLKVGKVEHEKLEKAIHGVAPAVEDFMETYEWELAEDDTHQLADNWFQCIHRLLTLFSSGEAREILCHGYIDSRSCQLIEGQVKDDRDILISGIIDHVVLFHVNNNKPKSLEPALREKNGFDLLKIISFLGDTIPQAEDLKIAVGDVKTRPRAIVPNHASVVRASKLQVMYYRFFLENLGKDPEIAYQKLILNATRRDINIDTPINISNLIYFMEIDPAIRPDLERIMLGEPIGFEPFDRYYQSELENGDEDNIAMPSEIGEANEYNLSQYADLTMEESTLEKYGTFYQKWANPPTLRYFAARLAQLYGTLLPLLSNDLMIEYYTGDYKFYTDKFQYDSALLKQECHSSSQFWFGKRSVEPIVPTKKNLVTFCKYCDFHDVCGWRANGNKMFKQLGPTLEEISKL</sequence>
<comment type="function">
    <text evidence="1">Single strand DNA specific 5' exonuclease involved in mitochondrial DNA replication and recombination. Releases dinucleotides as main products of catalysis. Has the capacity to slide across 5'double-stranded DNA or 5'RNA sequences and resumes cutting two nucleotides downstream of the double-stranded-to-single-stranded junction or RNA-to-DNA junction, respectively (By similarity).</text>
</comment>
<comment type="cofactor">
    <cofactor evidence="1">
        <name>Mg(2+)</name>
        <dbReference type="ChEBI" id="CHEBI:18420"/>
    </cofactor>
</comment>
<comment type="cofactor">
    <cofactor evidence="1">
        <name>[4Fe-4S] cluster</name>
        <dbReference type="ChEBI" id="CHEBI:49883"/>
    </cofactor>
    <text evidence="1">Binds 1 [4Fe-4S] cluster.</text>
</comment>
<comment type="subunit">
    <text evidence="1">Monomer.</text>
</comment>
<comment type="subcellular location">
    <subcellularLocation>
        <location>Mitochondrion</location>
    </subcellularLocation>
</comment>
<comment type="similarity">
    <text evidence="3">Belongs to the EXO5 family.</text>
</comment>
<gene>
    <name type="primary">EXO5</name>
    <name type="synonym">DEM1</name>
    <name type="ordered locus">KLLA0B09680g</name>
</gene>